<sequence>MIKTSKYGLGFKWAPEFRWLLPDAAEELASPMKSDEGGLCPSTGQAMESVGFVYDNHVKIDCRCILGQEWHVQSNLIRDIFVHEDLHVVEVLTKTAVKSGTAILIKSPLHSLGGFPKGYVMGLFRSYKTKRYVVHHLSMTTSTTNFGEDFLGWIVPFGFMPSYVHKWFQFCRLYIEESDLIISNFKFDDYDFSVEDAYAEVHAEPKGKYSQKAYALLRQYRGIKPVLFVDQYGCDYSGKLADCLQAYGHYSLQDMRQKQSVWLANCDFDIVVAWHVVRDSRFVMRLQTIATICGIKYVAQPTEDVVDGDVVIREPVHLLSADAIVLKLPSLMKVMTHMDDFSIKSIYNVDLCDCGFVMQYGYVDCFNDNCDFYGWVSGNMMDGFSCPLCCTVYDSSEVKAQSSGVIPENPVLFTNSTDTVNHDSFNLYGYSVTPFGSCIYWSPRPGLWIPIIKSSVKSYDDLVYSGVVGCKSIVKETALITHALYLDYVQCKCGNLEQNHILGVNNSWCRQLLLNRGDYNMLLKNIDLFVKRRADFACKFAVCGDGFVPFLLDGLIPRSYYLIQSGIFFTSLMSQFSQEVSDMCLKMCILFMDRVSVATFYIEHYVNRLVTQFKLLGTTLVNKMVNWFNTMLDASAPATGWLLYQLLNGLFVVSQANFNFVALIPDYAKILVNKFYTFFKLLLECVTVDVLKDMPVLKTINGLVCIVGNKFYNVSTGLIPGFVLPCNAQEQQIYFFEGVAESVIVEDDVIENVKSSLSSYEYCQPPKSVEKICIIDNMYMGKCGDKFFPIVMNDKNICLLDQAWRFPCAGRKVNFNEKPVVMEIPSLMTVKVMFDLDSTFDDILGKVCSEFEVEKGVTVDDFVAVVCDAIENALNSCKEHPVVGYQVRAFLNKLNENVVYLFDEAGDEAMASRMYCTFAIEDVEDVISSEAVEDTIDGVVEDTINDDEDVVTGDNDDEDVVTGDNDDEDVVTGDNDDEDVVTGDNDDEDVVTGDNDDEDVVTGDNDDEDVVTGDNDDEDVVTGDNDDEDVVTGDNDDEDVVTGDNDDEDVVTGDNDDEDVVTGDNDDEDVVTGDNDDEDVVTGDNNDEEIVTGDNDDQIVVTGDDVDDIESIYDFDTYKALLVFNDVYNDALFVSYGSSVETETYFKVNGLWSPTITHTNCWLRSVLLVMQKLPFKFKDLAIENMWLSYKVGYNQSFVDYLLTTIPKAIVLPQGGFVADFAYWFLNQFDINAYANWCCLKCGFSFDLNGLDALFFYGDIVSHVCKCGHNMTLIAADLPCTLHFSLFDDNFCAFCTPKKIFIAACAVDVNVCHSVAVIGDEQIDGKFVTKFSGDKFDFIVGYGMSFSMSSFELPQLYGLCITPNVCFVKGDIINVARLVKADVIVNPANGHMLHGGGVAKAIAVAAGKKFSKETAAMVKSKGVCQVGDCYVSTGGKLCKTILNIVGPDARQDGRQSYVLLARAYKHLNNYDCCLSTLISAGIFSVPADVSLTYLLGVVDKQVILVSNNKEDFDIIQKCQITSVVGTKALAVRLTANVGRVIKFETDAYKLFLSGDDCFVSNSSVIQEVLLLRHDIQLNNDVRDYLLSKMTSLPKDWRLINKFDVINGVKTVKYFECPNSIYICSQGKDFGYVCDGSFYKATVNQVCVLLAKKIDVLLTVDGVNFKSISLTVGEVFGKILGNVFCDGIDVTKLKCSDFYADKILYQYENLSLADISAVQSSFGFDQQQLLAYYNFLTVCKWSVVVNGPFFSFEQSHNNCYVNVACLMLQHINLKFNKWQWQEAWYEFRAGRPHRLVALVLAKGHFKFDEPSDATDFIRVVLKQADLSGAICELELICDCGIKQESRVGVDAVMHFGTLAKTDLFNGYKIGCNCAGRIVHCTKLNVPFLICSNTPLSKDLPDDVVAANMFMGVGVGHYTHLKCGSPYQHYDACSVKKYTGVSGCLTDCLYLKNLTQTFTSMLTNYFLDDVEMVAYNPDLSQYYCDNGKYYTKPIIKAQFKPFAKVDGVYTNFKLVGHDICAQLNDKLGFNVDLPFVEYKVTVWPVATGDVVLASDDLYVKRYFKGCETFGKPVIWFCHDEASLNSLTYFNKPSFKSENRYSVLSVDSVSEESQGNVVTSVMESQISTKEVKLKGVRKTVKIEDAIIVNDENSSIKVVKSLSLVDVWDMYLTGCDYVVWVANELSRLVKSPTVREYIRYGIKPITIPIDLLCLRDDNQTLLVPKIFKARAIEFYGFLKWLFIYVFSLLHFTNDKTIFYTTEIASKFTFNLFCLALKNAFQTFRWSIFIKGFLVVATVFLFWFNFLYINVIFSDFYLPNISVFPIFVGRIVMWIKATFGLVTICDFYSKLGVGFTSHFCNGSFICELCHSGFDMLDTYAAIDFVQYEVDRRVLFDYVSLVKLIVELVIGYSLYTVWFYPLFCLIGLQLFTTWLPDLFMLETMHWLIRFIVFVANMLPAFVLLRFYIVVTAMYKVVGFIRHIVYGCNKAGCLFCYKRNCSVRVKCSTIVGGVIRYYDITANGGTGFCVKHQWNCFNCHSFKPGNTFITVEAAIELSKELKRPVNPTDASHYVVTDIKQVGCMMRLFYDRDGQRVYDDVDASLFVDINNLLHSKVKVVPNLYVVVVESDADRANFLNAVVFYAQSLYRPILLVDKKLITTACNGISVTQTMFDVYVDTFMSHFDVDRKSFNNFVNIAHASLREGVQLEKVLDTFVGCVRKCCSIDSDVETRFITKSMISAVAAGLEFTDENYNNLVPTYLKSDNIVAADLGVLIQNGAKHVQGNVAKAANISCIWFIDAFNQLTADLQHKLKKACVKTGLKLKLTFNKQEASVPILTTPFSLKGGVVLSNLLYILFFVSLICFILLWALLPTYSVYKSDIHLPAYASFKVIDNGVVRDISVNDLCFANKFFQFDQWYESTFGSVYYHNSMDCPIVVAVMDEDIGSTMFNVPTKVLRHGFHVLHFLTYAFASDSVQCYTPHIQISYNDFYASGCVLSSLCTMFKRGDGTPHPYCYSDGVMKNASLYTSLVPHTRYSLANSNGFIRFPDVISEGIVRIVRTRSMTYCRVGACEYAEEGICFNFNSSWVLNNDYYRSMPGTFCGRDLFDLFYQFFSSLIRPIDFFSLTASSIFGAILAIVVVLVFYYLIKLKRAFGDYTSVVVINVVVWCINFLMLFVFQVYPICACVYACFYFYVTLYFPSEISVIMHLQWIVMYGAIMPFWFCVTYVAMVIANHVLWLFSYCRKIGVNVCSDSTFEETSLTTFMITKDSYCRLKNSVSDVAYNRYLSLYNKYRYYSGKMDTAAYREAACSQLAKAMETFNHNNGNDVLYQPPTASVSTSFLQSGIVKMVSPTSKIEPCIVSVTYGSMTLNGLWLDDKVYCPRHVICSSSNMNEPDYSALLCRVTLGDFTIMSGRMSLTVVSYQMQGCQLVLTVSLQNPYTPKYTFGNVKPGETFTVLAAYNGRPQGAFHVTMRSSYTIKGSFLCGSCGSVGYVLTGDSVKFVYMHQLELSTGCHTGTDFTGNFYGPYRDAQVVQLPVKDYVQTVNVIAWLYAAILNNCAWFVQNDVCSTEDFNVWAMANGFSQVKADLVLDALASMTGVSIETLLAAIKRLYMGFQGRQILGSCTFEDELAPSDVYQQLAGVKLQSKTKRFIKETIYWILISTFLFSCIISAFVKWTIFMYINTHMIGVTLCVLCFVSFMMLLVKHKHFYLTMYIIPVLCTLFYVNYLVVYKEGFRGFTYVWLSYFVPAVNFTYVYEVFYGCILCVFAIFITMHSINHDIFSLMFLVGRIVTLISMWYFGSNLEEDVLLFITAFLGTYTWTTILSLAIAKIVANWLSVNIFYFTDVPYIKLILLSYLFIGYILSCYWGFFSLLNSVFRMPMGVYNYKISVQELRYMNANGLRPPRNSFEAILLNLKLLGIGGVPVIEVSQIQSKLTDVKCANVVLLNCLQHLHVASNSKLWQYCSVLHNEILSTSDLSVAFDKLAQLLIVLFANPAAVDTKCLASIDEVSDDYVQDSTVLQALQSEFVNMASFVEYEVAKKNLADAKNSGSVNQQQIKQLEKACNIAKSVYERDKAVARKLERMADLALTNMYKEARINDKKSKVVSALQTMLFSMVRKLDNQALNSILDNAVKGCVPLSAIPALAANTLTIVIPDKQVFDKVVDNVYVTYAGSVWHIQTVQDADGINKQLTDISVDSNWPLVIIANRYNEVANAVMQNNELMPHKLKIQVVNSGSDMNCNIPTQCYYNNGSSGRIVYAVLSDVDGLKYTKIMKDDGNCVVLELDPPCKFSIQDVKGLKIKYLYFIKGCNTLARGWVVGTLSSTIRLQAGVATEYAANSSILSLCAFSVDPKKTYLDYIQQGGVPIINCVKMLCDHAGTGMAITIKPEATINQDSYGGASVCIYCRARVEHPDVDGICKLRGKFVQVPLGIKDPILYVLTHDVCQVCGFWRDGSCSCVGSSVAVQSKDLNFLNGFGVLV</sequence>
<organism>
    <name type="scientific">Human coronavirus HKU1 (isolate N1)</name>
    <name type="common">HCoV-HKU1</name>
    <dbReference type="NCBI Taxonomy" id="443239"/>
    <lineage>
        <taxon>Viruses</taxon>
        <taxon>Riboviria</taxon>
        <taxon>Orthornavirae</taxon>
        <taxon>Pisuviricota</taxon>
        <taxon>Pisoniviricetes</taxon>
        <taxon>Nidovirales</taxon>
        <taxon>Cornidovirineae</taxon>
        <taxon>Coronaviridae</taxon>
        <taxon>Orthocoronavirinae</taxon>
        <taxon>Betacoronavirus</taxon>
        <taxon>Embecovirus</taxon>
        <taxon>Human coronavirus HKU1</taxon>
    </lineage>
</organism>
<accession>P0C6U3</accession>
<accession>Q5MQD2</accession>
<comment type="function">
    <text evidence="1">The papain-like proteinase 1 (PL1-PRO) and papain-like proteinase 2 (PL2-PRO) are responsible for the cleavages located at the N-terminus of the replicase polyprotein. In addition, PLP2 possesses a deubiquitinating/deISGylating activity and processes both 'Lys-48'- and 'Lys-63'-linked polyubiquitin chains from cellular substrates. Antagonizes innate immune induction of type I interferon by blocking the phosphorylation, dimerization and subsequent nuclear translocation of host IRF-3 (By similarity).</text>
</comment>
<comment type="function">
    <molecule>3C-like proteinase nsp5</molecule>
    <text evidence="7">Responsible for the majority of cleavages as it cleaves the C-terminus of replicase polyprotein at 11 sites. Recognizes substrates containing the core sequence [ILMVF]-Q-|-[SGACN]. Inhibited by the substrate-analog Cbz-Val-Asn-Ser-Thr-Leu-Gln-CMK. Also contains an ADP-ribose-1''-phosphate (ADRP)-binding function (By similarity).</text>
</comment>
<comment type="function">
    <text evidence="1">Nsp7-nsp8 hexadecamer may possibly confer processivity to the polymerase, maybe by binding to dsRNA or by producing primers utilized by the latter.</text>
</comment>
<comment type="function">
    <molecule>RNA-capping enzyme subunit nsp9</molecule>
    <text evidence="2">Catalytic subunit of viral RNA capping enzyme which catalyzes the RNA guanylyltransferase reaction for genomic and sub-genomic RNAs. The kinase-like NiRAN domain of NSP12 transfers RNA to the amino terminus of NSP9, forming a covalent RNA-protein intermediate. Subsequently, the NiRAN domain transfers RNA to GDP, forming the core cap structure GpppA-RNA. The NSP14 and NSP16 methyltransferases then add methyl groups to form functional cap structures.</text>
</comment>
<comment type="function">
    <molecule>Non-structural protein 1</molecule>
    <text evidence="1">Binds to the 40S ribosomal subunit and inhibits host translation. The nsp1-40S ribosome complex further induces an endonucleolytic cleavage near the 5'UTR of host mRNAs, targeting them for degradation. By suppressing host gene expression, nsp1 facilitates efficient viral gene expression in infected cells and evasion from host immune response (By similarity).</text>
</comment>
<comment type="catalytic activity">
    <molecule>Papain-like protease nsp3</molecule>
    <reaction evidence="2">
        <text>Thiol-dependent hydrolysis of ester, thioester, amide, peptide and isopeptide bonds formed by the C-terminal Gly of ubiquitin (a 76-residue protein attached to proteins as an intracellular targeting signal).</text>
        <dbReference type="EC" id="3.4.19.12"/>
    </reaction>
</comment>
<comment type="catalytic activity">
    <molecule>3C-like proteinase nsp5</molecule>
    <reaction evidence="2">
        <text>TSAVLQ-|-SGFRK-NH2 and SGVTFQ-|-GKFKK the two peptides corresponding to the two self-cleavage sites of the SARS 3C-like proteinase are the two most reactive peptide substrates. The enzyme exhibits a strong preference for substrates containing Gln at P1 position and Leu at P2 position.</text>
        <dbReference type="EC" id="3.4.22.69"/>
    </reaction>
</comment>
<comment type="catalytic activity">
    <molecule>RNA-capping enzyme subunit nsp9</molecule>
    <reaction evidence="2">
        <text>a 5'-end diphospho-ribonucleoside in mRNA + GTP + H(+) = a 5'-end (5'-triphosphoguanosine)-ribonucleoside in mRNA + diphosphate</text>
        <dbReference type="Rhea" id="RHEA:67012"/>
        <dbReference type="Rhea" id="RHEA-COMP:17165"/>
        <dbReference type="Rhea" id="RHEA-COMP:17166"/>
        <dbReference type="ChEBI" id="CHEBI:15378"/>
        <dbReference type="ChEBI" id="CHEBI:33019"/>
        <dbReference type="ChEBI" id="CHEBI:37565"/>
        <dbReference type="ChEBI" id="CHEBI:167616"/>
        <dbReference type="ChEBI" id="CHEBI:167617"/>
        <dbReference type="EC" id="2.7.7.50"/>
    </reaction>
    <physiologicalReaction direction="right-to-left" evidence="2">
        <dbReference type="Rhea" id="RHEA:67014"/>
    </physiologicalReaction>
</comment>
<comment type="subunit">
    <text evidence="1">3CL-PRO exists as monomer and homodimer. Eight copies of nsp7 and eight copies of nsp8 assemble to form a heterohexadecamer. Nsp9 is a dimer. Nsp10 forms a dodecamer (By similarity).</text>
</comment>
<comment type="subcellular location">
    <molecule>Papain-like protease nsp3</molecule>
    <subcellularLocation>
        <location evidence="24">Host membrane</location>
        <topology evidence="24">Multi-pass membrane protein</topology>
    </subcellularLocation>
</comment>
<comment type="subcellular location">
    <molecule>Non-structural protein 4</molecule>
    <subcellularLocation>
        <location evidence="24">Host membrane</location>
        <topology evidence="24">Multi-pass membrane protein</topology>
    </subcellularLocation>
</comment>
<comment type="subcellular location">
    <molecule>Non-structural protein 6</molecule>
    <subcellularLocation>
        <location evidence="24">Host membrane</location>
        <topology evidence="24">Multi-pass membrane protein</topology>
    </subcellularLocation>
</comment>
<comment type="subcellular location">
    <molecule>Non-structural protein 7</molecule>
    <subcellularLocation>
        <location evidence="1">Host cytoplasm</location>
        <location evidence="1">Host perinuclear region</location>
    </subcellularLocation>
    <text>nsp7, nsp8, nsp9 and nsp10 are localized in cytoplasmic foci, largely perinuclear. Late in infection, they merge into confluent complexes.</text>
</comment>
<comment type="subcellular location">
    <molecule>Non-structural protein 8</molecule>
    <subcellularLocation>
        <location evidence="1">Host cytoplasm</location>
        <location evidence="1">Host perinuclear region</location>
    </subcellularLocation>
    <text>nsp7, nsp8, nsp9 and nsp10 are localized in cytoplasmic foci, largely perinuclear. Late in infection, they merge into confluent complexes.</text>
</comment>
<comment type="subcellular location">
    <molecule>RNA-capping enzyme subunit nsp9</molecule>
    <subcellularLocation>
        <location evidence="1">Host cytoplasm</location>
        <location evidence="1">Host perinuclear region</location>
    </subcellularLocation>
    <text>nsp7, nsp8, nsp9 and nsp10 are localized in cytoplasmic foci, largely perinuclear. Late in infection, they merge into confluent complexes.</text>
</comment>
<comment type="subcellular location">
    <molecule>Non-structural protein 10</molecule>
    <subcellularLocation>
        <location evidence="1">Host cytoplasm</location>
        <location evidence="1">Host perinuclear region</location>
    </subcellularLocation>
    <text>nsp7, nsp8, nsp9 and nsp10 are localized in cytoplasmic foci, largely perinuclear. Late in infection, they merge into confluent complexes.</text>
</comment>
<comment type="alternative products">
    <event type="ribosomal frameshifting"/>
    <isoform>
        <id>P0C6U3-1</id>
        <name>Replicase polyprotein 1a</name>
        <name>pp1a</name>
        <name>ORF1a polyprotein</name>
        <sequence type="displayed"/>
    </isoform>
    <isoform>
        <id>P0C6X2-1</id>
        <name>Replicase polyprotein 1ab</name>
        <name>pp1ab</name>
        <sequence type="external"/>
    </isoform>
</comment>
<comment type="domain">
    <text>The hydrophobic domains (HD) could mediate the membrane association of the replication complex and thereby alter the architecture of the host cell membrane.</text>
</comment>
<comment type="PTM">
    <text evidence="1">Specific enzymatic cleavages in vivo by its own proteases yield mature proteins. 3CL-PRO and PL-PRO proteinases are autocatalytically processed (By similarity).</text>
</comment>
<comment type="miscellaneous">
    <text>Isolate N1 belongs to genotype A.</text>
</comment>
<comment type="miscellaneous">
    <molecule>Isoform Replicase polyprotein 1a</molecule>
    <text>Produced by conventional translation.</text>
</comment>
<comment type="similarity">
    <text evidence="24">Belongs to the coronaviruses polyprotein 1ab family.</text>
</comment>
<feature type="chain" id="PRO_0000338194" description="Replicase polyprotein 1a">
    <location>
        <begin position="1"/>
        <end position="4471"/>
    </location>
</feature>
<feature type="chain" id="PRO_0000338195" description="Non-structural protein 1" evidence="1">
    <location>
        <begin position="1"/>
        <end position="222"/>
    </location>
</feature>
<feature type="chain" id="PRO_0000338196" description="Non-structural protein 2" evidence="1">
    <location>
        <begin position="223"/>
        <end position="809"/>
    </location>
</feature>
<feature type="chain" id="PRO_0000338197" description="Papain-like protease nsp3" evidence="1">
    <location>
        <begin position="810"/>
        <end position="2838"/>
    </location>
</feature>
<feature type="chain" id="PRO_0000338198" description="Non-structural protein 4" evidence="1">
    <location>
        <begin position="2839"/>
        <end position="3334"/>
    </location>
</feature>
<feature type="chain" id="PRO_0000338199" description="3C-like proteinase nsp5" evidence="1">
    <location>
        <begin position="3335"/>
        <end position="3637"/>
    </location>
</feature>
<feature type="chain" id="PRO_0000338200" description="Non-structural protein 6" evidence="1">
    <location>
        <begin position="3638"/>
        <end position="3924"/>
    </location>
</feature>
<feature type="chain" id="PRO_0000338201" description="Non-structural protein 7" evidence="1">
    <location>
        <begin position="3925"/>
        <end position="4016"/>
    </location>
</feature>
<feature type="chain" id="PRO_0000338202" description="Non-structural protein 8" evidence="1">
    <location>
        <begin position="4017"/>
        <end position="4210"/>
    </location>
</feature>
<feature type="chain" id="PRO_0000338203" description="RNA-capping enzyme subunit nsp9" evidence="1">
    <location>
        <begin position="4211"/>
        <end position="4320"/>
    </location>
</feature>
<feature type="chain" id="PRO_0000338204" description="Non-structural protein 10" evidence="1">
    <location>
        <begin position="4321"/>
        <end position="4457"/>
    </location>
</feature>
<feature type="chain" id="PRO_0000338205" description="Non-structural protein 11" evidence="3">
    <location>
        <begin position="4458"/>
        <end position="4471"/>
    </location>
</feature>
<feature type="transmembrane region" description="Helical" evidence="3">
    <location>
        <begin position="2226"/>
        <end position="2246"/>
    </location>
</feature>
<feature type="transmembrane region" description="Helical" evidence="3">
    <location>
        <begin position="2287"/>
        <end position="2307"/>
    </location>
</feature>
<feature type="transmembrane region" description="Helical" evidence="3">
    <location>
        <begin position="2318"/>
        <end position="2338"/>
    </location>
</feature>
<feature type="transmembrane region" description="Helical" evidence="3">
    <location>
        <begin position="2401"/>
        <end position="2421"/>
    </location>
</feature>
<feature type="transmembrane region" description="Helical" evidence="3">
    <location>
        <begin position="2443"/>
        <end position="2463"/>
    </location>
</feature>
<feature type="transmembrane region" description="Helical" evidence="3">
    <location>
        <begin position="2844"/>
        <end position="2864"/>
    </location>
</feature>
<feature type="transmembrane region" description="Helical" evidence="3">
    <location>
        <begin position="3119"/>
        <end position="3139"/>
    </location>
</feature>
<feature type="transmembrane region" description="Helical" evidence="3">
    <location>
        <begin position="3151"/>
        <end position="3171"/>
    </location>
</feature>
<feature type="transmembrane region" description="Helical" evidence="3">
    <location>
        <begin position="3178"/>
        <end position="3198"/>
    </location>
</feature>
<feature type="transmembrane region" description="Helical" evidence="3">
    <location>
        <begin position="3203"/>
        <end position="3223"/>
    </location>
</feature>
<feature type="transmembrane region" description="Helical" evidence="3">
    <location>
        <begin position="3651"/>
        <end position="3671"/>
    </location>
</feature>
<feature type="transmembrane region" description="Helical" evidence="3">
    <location>
        <begin position="3676"/>
        <end position="3696"/>
    </location>
</feature>
<feature type="transmembrane region" description="Helical" evidence="3">
    <location>
        <begin position="3701"/>
        <end position="3721"/>
    </location>
</feature>
<feature type="transmembrane region" description="Helical" evidence="3">
    <location>
        <begin position="3744"/>
        <end position="3764"/>
    </location>
</feature>
<feature type="transmembrane region" description="Helical" evidence="3">
    <location>
        <begin position="3772"/>
        <end position="3792"/>
    </location>
</feature>
<feature type="transmembrane region" description="Helical" evidence="3">
    <location>
        <begin position="3800"/>
        <end position="3820"/>
    </location>
</feature>
<feature type="transmembrane region" description="Helical" evidence="3">
    <location>
        <begin position="3843"/>
        <end position="3863"/>
    </location>
</feature>
<feature type="domain" description="CoV Nsp1 globular" evidence="15">
    <location>
        <begin position="54"/>
        <end position="174"/>
    </location>
</feature>
<feature type="domain" description="BetaCoV Nsp1 C-terminal" evidence="16">
    <location>
        <begin position="192"/>
        <end position="222"/>
    </location>
</feature>
<feature type="domain" description="CoV Nsp2 N-terminal" evidence="17">
    <location>
        <begin position="226"/>
        <end position="488"/>
    </location>
</feature>
<feature type="domain" description="CoV Nsp2 middle" evidence="18">
    <location>
        <begin position="493"/>
        <end position="681"/>
    </location>
</feature>
<feature type="domain" description="CoV Nsp2 C-terminal" evidence="19">
    <location>
        <begin position="697"/>
        <end position="809"/>
    </location>
</feature>
<feature type="domain" description="Ubiquitin-like 1" evidence="4">
    <location>
        <begin position="811"/>
        <end position="923"/>
    </location>
</feature>
<feature type="repeat" description="1">
    <location>
        <begin position="945"/>
        <end position="954"/>
    </location>
</feature>
<feature type="repeat" description="2">
    <location>
        <begin position="955"/>
        <end position="964"/>
    </location>
</feature>
<feature type="repeat" description="3">
    <location>
        <begin position="965"/>
        <end position="974"/>
    </location>
</feature>
<feature type="repeat" description="4">
    <location>
        <begin position="975"/>
        <end position="984"/>
    </location>
</feature>
<feature type="repeat" description="5">
    <location>
        <begin position="985"/>
        <end position="994"/>
    </location>
</feature>
<feature type="repeat" description="6">
    <location>
        <begin position="995"/>
        <end position="1004"/>
    </location>
</feature>
<feature type="repeat" description="7">
    <location>
        <begin position="1005"/>
        <end position="1014"/>
    </location>
</feature>
<feature type="repeat" description="8">
    <location>
        <begin position="1015"/>
        <end position="1024"/>
    </location>
</feature>
<feature type="repeat" description="9">
    <location>
        <begin position="1025"/>
        <end position="1034"/>
    </location>
</feature>
<feature type="repeat" description="10">
    <location>
        <begin position="1035"/>
        <end position="1044"/>
    </location>
</feature>
<feature type="repeat" description="11">
    <location>
        <begin position="1045"/>
        <end position="1054"/>
    </location>
</feature>
<feature type="repeat" description="12">
    <location>
        <begin position="1055"/>
        <end position="1064"/>
    </location>
</feature>
<feature type="repeat" description="13">
    <location>
        <begin position="1065"/>
        <end position="1074"/>
    </location>
</feature>
<feature type="repeat" description="14">
    <location>
        <begin position="1075"/>
        <end position="1084"/>
    </location>
</feature>
<feature type="domain" description="Peptidase C16 1" evidence="5">
    <location>
        <begin position="1123"/>
        <end position="1373"/>
    </location>
</feature>
<feature type="domain" description="Macro" evidence="6">
    <location>
        <begin position="1351"/>
        <end position="1522"/>
    </location>
</feature>
<feature type="domain" description="DPUP" evidence="8">
    <location>
        <begin position="1578"/>
        <end position="1649"/>
    </location>
</feature>
<feature type="domain" description="Ubiquitin-like 2" evidence="4">
    <location>
        <begin position="1649"/>
        <end position="1704"/>
    </location>
</feature>
<feature type="domain" description="Peptidase C16 2" evidence="5">
    <location>
        <begin position="1718"/>
        <end position="1978"/>
    </location>
</feature>
<feature type="domain" description="Nucleic acid-binding" evidence="9">
    <location>
        <begin position="1992"/>
        <end position="2093"/>
    </location>
</feature>
<feature type="domain" description="G2M" evidence="22">
    <location>
        <begin position="2108"/>
        <end position="2257"/>
    </location>
</feature>
<feature type="domain" description="3Ecto" evidence="21">
    <location>
        <begin position="2323"/>
        <end position="2384"/>
    </location>
</feature>
<feature type="domain" description="CoV Nsp3 Y" evidence="20">
    <location>
        <begin position="2471"/>
        <end position="2838"/>
    </location>
</feature>
<feature type="domain" description="Nsp4C" evidence="10">
    <location>
        <begin position="3237"/>
        <end position="3334"/>
    </location>
</feature>
<feature type="domain" description="Peptidase C30" evidence="7">
    <location>
        <begin position="3335"/>
        <end position="3637"/>
    </location>
</feature>
<feature type="domain" description="RdRp Nsp7 cofactor" evidence="11">
    <location>
        <begin position="3925"/>
        <end position="4013"/>
    </location>
</feature>
<feature type="domain" description="RdRp Nsp8 cofactor" evidence="12">
    <location>
        <begin position="4014"/>
        <end position="4210"/>
    </location>
</feature>
<feature type="domain" description="Nsp9 ssRNA-binding" evidence="13">
    <location>
        <begin position="4211"/>
        <end position="4320"/>
    </location>
</feature>
<feature type="domain" description="ExoN/MTase coactivator" evidence="14">
    <location>
        <begin position="4321"/>
        <end position="4458"/>
    </location>
</feature>
<feature type="zinc finger region" description="C4-type 1" evidence="5">
    <location>
        <begin position="1238"/>
        <end position="1266"/>
    </location>
</feature>
<feature type="zinc finger region" description="C4-type 2" evidence="5">
    <location>
        <begin position="1835"/>
        <end position="1871"/>
    </location>
</feature>
<feature type="zinc finger region" evidence="1">
    <location>
        <begin position="4394"/>
        <end position="4410"/>
    </location>
</feature>
<feature type="zinc finger region" evidence="1">
    <location>
        <begin position="4436"/>
        <end position="4449"/>
    </location>
</feature>
<feature type="region of interest" description="C4" evidence="17">
    <location>
        <begin position="365"/>
        <end position="389"/>
    </location>
</feature>
<feature type="region of interest" description="14 X 10 AA tandem repeat of N-[DN]-D-E-D-V-V-T-G-D">
    <location>
        <begin position="945"/>
        <end position="1084"/>
    </location>
</feature>
<feature type="region of interest" description="Disordered" evidence="23">
    <location>
        <begin position="946"/>
        <end position="1064"/>
    </location>
</feature>
<feature type="region of interest" description="HD1" evidence="1">
    <location>
        <begin position="2226"/>
        <end position="2463"/>
    </location>
</feature>
<feature type="region of interest" description="Y1" evidence="20">
    <location>
        <begin position="2471"/>
        <end position="2561"/>
    </location>
</feature>
<feature type="region of interest" description="ZF1" evidence="20">
    <location>
        <begin position="2475"/>
        <end position="2488"/>
    </location>
</feature>
<feature type="region of interest" description="ZF2" evidence="20">
    <location>
        <begin position="2521"/>
        <end position="2531"/>
    </location>
</feature>
<feature type="region of interest" description="CoV-Y" evidence="20">
    <location>
        <begin position="2562"/>
        <end position="2838"/>
    </location>
</feature>
<feature type="region of interest" description="Y2" evidence="20">
    <location>
        <begin position="2562"/>
        <end position="2654"/>
    </location>
</feature>
<feature type="region of interest" description="Y3" evidence="20">
    <location>
        <begin position="2655"/>
        <end position="2737"/>
    </location>
</feature>
<feature type="region of interest" description="Y4" evidence="20">
    <location>
        <begin position="2738"/>
        <end position="2838"/>
    </location>
</feature>
<feature type="region of interest" description="HD2" evidence="1">
    <location>
        <begin position="2844"/>
        <end position="3223"/>
    </location>
</feature>
<feature type="region of interest" description="HD3" evidence="1">
    <location>
        <begin position="3651"/>
        <end position="3863"/>
    </location>
</feature>
<feature type="active site" description="For PL1-PRO activity" evidence="5">
    <location>
        <position position="1161"/>
    </location>
</feature>
<feature type="active site" description="For PL1-PRO activity" evidence="5">
    <location>
        <position position="1312"/>
    </location>
</feature>
<feature type="active site" description="For PL1-PRO activity" evidence="5">
    <location>
        <position position="1323"/>
    </location>
</feature>
<feature type="active site" description="For PL2-PRO activity" evidence="5">
    <location>
        <position position="1757"/>
    </location>
</feature>
<feature type="active site" description="For PL2-PRO activity" evidence="5">
    <location>
        <position position="1914"/>
    </location>
</feature>
<feature type="active site" description="For PL2-PRO activity" evidence="5">
    <location>
        <position position="1928"/>
    </location>
</feature>
<feature type="active site" description="For 3CL-PRO activity" evidence="7">
    <location>
        <position position="3375"/>
    </location>
</feature>
<feature type="active site" description="For 3CL-PRO activity" evidence="7">
    <location>
        <position position="3479"/>
    </location>
</feature>
<feature type="binding site" evidence="17">
    <location>
        <position position="365"/>
    </location>
    <ligand>
        <name>Zn(2+)</name>
        <dbReference type="ChEBI" id="CHEBI:29105"/>
        <label>1</label>
    </ligand>
</feature>
<feature type="binding site" evidence="17">
    <location>
        <position position="370"/>
    </location>
    <ligand>
        <name>Zn(2+)</name>
        <dbReference type="ChEBI" id="CHEBI:29105"/>
        <label>1</label>
    </ligand>
</feature>
<feature type="binding site" evidence="17">
    <location>
        <position position="386"/>
    </location>
    <ligand>
        <name>Zn(2+)</name>
        <dbReference type="ChEBI" id="CHEBI:29105"/>
        <label>1</label>
    </ligand>
</feature>
<feature type="binding site" evidence="17">
    <location>
        <position position="389"/>
    </location>
    <ligand>
        <name>Zn(2+)</name>
        <dbReference type="ChEBI" id="CHEBI:29105"/>
        <label>1</label>
    </ligand>
</feature>
<feature type="binding site" evidence="5">
    <location>
        <position position="1238"/>
    </location>
    <ligand>
        <name>Zn(2+)</name>
        <dbReference type="ChEBI" id="CHEBI:29105"/>
        <label>2</label>
    </ligand>
</feature>
<feature type="binding site" evidence="5">
    <location>
        <position position="1238"/>
    </location>
    <ligand>
        <name>Zn(2+)</name>
        <dbReference type="ChEBI" id="CHEBI:29105"/>
        <label>3</label>
    </ligand>
</feature>
<feature type="binding site" evidence="5">
    <location>
        <position position="1241"/>
    </location>
    <ligand>
        <name>Zn(2+)</name>
        <dbReference type="ChEBI" id="CHEBI:29105"/>
        <label>2</label>
    </ligand>
</feature>
<feature type="binding site" evidence="5">
    <location>
        <position position="1241"/>
    </location>
    <ligand>
        <name>Zn(2+)</name>
        <dbReference type="ChEBI" id="CHEBI:29105"/>
        <label>3</label>
    </ligand>
</feature>
<feature type="binding site" evidence="5">
    <location>
        <position position="1264"/>
    </location>
    <ligand>
        <name>Zn(2+)</name>
        <dbReference type="ChEBI" id="CHEBI:29105"/>
        <label>2</label>
    </ligand>
</feature>
<feature type="binding site" evidence="5">
    <location>
        <position position="1264"/>
    </location>
    <ligand>
        <name>Zn(2+)</name>
        <dbReference type="ChEBI" id="CHEBI:29105"/>
        <label>3</label>
    </ligand>
</feature>
<feature type="binding site" evidence="5">
    <location>
        <position position="1266"/>
    </location>
    <ligand>
        <name>Zn(2+)</name>
        <dbReference type="ChEBI" id="CHEBI:29105"/>
        <label>2</label>
    </ligand>
</feature>
<feature type="binding site" evidence="5">
    <location>
        <position position="1266"/>
    </location>
    <ligand>
        <name>Zn(2+)</name>
        <dbReference type="ChEBI" id="CHEBI:29105"/>
        <label>3</label>
    </ligand>
</feature>
<feature type="binding site" evidence="5">
    <location>
        <position position="1835"/>
    </location>
    <ligand>
        <name>Zn(2+)</name>
        <dbReference type="ChEBI" id="CHEBI:29105"/>
        <label>3</label>
    </ligand>
</feature>
<feature type="binding site" evidence="5">
    <location>
        <position position="1835"/>
    </location>
    <ligand>
        <name>Zn(2+)</name>
        <dbReference type="ChEBI" id="CHEBI:29105"/>
        <label>4</label>
    </ligand>
</feature>
<feature type="binding site" evidence="5">
    <location>
        <position position="1837"/>
    </location>
    <ligand>
        <name>Zn(2+)</name>
        <dbReference type="ChEBI" id="CHEBI:29105"/>
        <label>3</label>
    </ligand>
</feature>
<feature type="binding site" evidence="5">
    <location>
        <position position="1837"/>
    </location>
    <ligand>
        <name>Zn(2+)</name>
        <dbReference type="ChEBI" id="CHEBI:29105"/>
        <label>4</label>
    </ligand>
</feature>
<feature type="binding site" evidence="5">
    <location>
        <position position="1869"/>
    </location>
    <ligand>
        <name>Zn(2+)</name>
        <dbReference type="ChEBI" id="CHEBI:29105"/>
        <label>3</label>
    </ligand>
</feature>
<feature type="binding site" evidence="5">
    <location>
        <position position="1869"/>
    </location>
    <ligand>
        <name>Zn(2+)</name>
        <dbReference type="ChEBI" id="CHEBI:29105"/>
        <label>4</label>
    </ligand>
</feature>
<feature type="binding site" evidence="5">
    <location>
        <position position="1871"/>
    </location>
    <ligand>
        <name>Zn(2+)</name>
        <dbReference type="ChEBI" id="CHEBI:29105"/>
        <label>3</label>
    </ligand>
</feature>
<feature type="binding site" evidence="5">
    <location>
        <position position="1871"/>
    </location>
    <ligand>
        <name>Zn(2+)</name>
        <dbReference type="ChEBI" id="CHEBI:29105"/>
        <label>4</label>
    </ligand>
</feature>
<feature type="binding site" evidence="20">
    <location>
        <position position="2475"/>
    </location>
    <ligand>
        <name>Zn(2+)</name>
        <dbReference type="ChEBI" id="CHEBI:29105"/>
        <label>5</label>
    </ligand>
</feature>
<feature type="binding site" evidence="20">
    <location>
        <position position="2480"/>
    </location>
    <ligand>
        <name>Zn(2+)</name>
        <dbReference type="ChEBI" id="CHEBI:29105"/>
        <label>5</label>
    </ligand>
</feature>
<feature type="binding site" evidence="20">
    <location>
        <position position="2485"/>
    </location>
    <ligand>
        <name>Zn(2+)</name>
        <dbReference type="ChEBI" id="CHEBI:29105"/>
        <label>5</label>
    </ligand>
</feature>
<feature type="binding site" evidence="20">
    <location>
        <position position="2488"/>
    </location>
    <ligand>
        <name>Zn(2+)</name>
        <dbReference type="ChEBI" id="CHEBI:29105"/>
        <label>5</label>
    </ligand>
</feature>
<feature type="binding site" evidence="20">
    <location>
        <position position="2521"/>
    </location>
    <ligand>
        <name>Zn(2+)</name>
        <dbReference type="ChEBI" id="CHEBI:29105"/>
        <label>6</label>
    </ligand>
</feature>
<feature type="binding site" evidence="20">
    <location>
        <position position="2524"/>
    </location>
    <ligand>
        <name>Zn(2+)</name>
        <dbReference type="ChEBI" id="CHEBI:29105"/>
        <label>6</label>
    </ligand>
</feature>
<feature type="binding site" evidence="20">
    <location>
        <position position="2528"/>
    </location>
    <ligand>
        <name>Zn(2+)</name>
        <dbReference type="ChEBI" id="CHEBI:29105"/>
        <label>6</label>
    </ligand>
</feature>
<feature type="binding site" evidence="20">
    <location>
        <position position="2531"/>
    </location>
    <ligand>
        <name>Zn(2+)</name>
        <dbReference type="ChEBI" id="CHEBI:29105"/>
        <label>6</label>
    </ligand>
</feature>
<feature type="binding site" evidence="14">
    <location>
        <position position="4394"/>
    </location>
    <ligand>
        <name>Zn(2+)</name>
        <dbReference type="ChEBI" id="CHEBI:29105"/>
        <label>7</label>
    </ligand>
</feature>
<feature type="binding site" evidence="14">
    <location>
        <position position="4397"/>
    </location>
    <ligand>
        <name>Zn(2+)</name>
        <dbReference type="ChEBI" id="CHEBI:29105"/>
        <label>7</label>
    </ligand>
</feature>
<feature type="binding site" evidence="14">
    <location>
        <position position="4403"/>
    </location>
    <ligand>
        <name>Zn(2+)</name>
        <dbReference type="ChEBI" id="CHEBI:29105"/>
        <label>7</label>
    </ligand>
</feature>
<feature type="binding site" evidence="14">
    <location>
        <position position="4410"/>
    </location>
    <ligand>
        <name>Zn(2+)</name>
        <dbReference type="ChEBI" id="CHEBI:29105"/>
        <label>7</label>
    </ligand>
</feature>
<feature type="binding site" evidence="14">
    <location>
        <position position="4436"/>
    </location>
    <ligand>
        <name>Zn(2+)</name>
        <dbReference type="ChEBI" id="CHEBI:29105"/>
        <label>8</label>
    </ligand>
</feature>
<feature type="binding site" evidence="14">
    <location>
        <position position="4439"/>
    </location>
    <ligand>
        <name>Zn(2+)</name>
        <dbReference type="ChEBI" id="CHEBI:29105"/>
        <label>8</label>
    </ligand>
</feature>
<feature type="binding site" evidence="14">
    <location>
        <position position="4447"/>
    </location>
    <ligand>
        <name>Zn(2+)</name>
        <dbReference type="ChEBI" id="CHEBI:29105"/>
        <label>8</label>
    </ligand>
</feature>
<feature type="binding site" evidence="14">
    <location>
        <position position="4449"/>
    </location>
    <ligand>
        <name>Zn(2+)</name>
        <dbReference type="ChEBI" id="CHEBI:29105"/>
        <label>8</label>
    </ligand>
</feature>
<feature type="site" description="Cleavage; by PL1-PRO" evidence="1">
    <location>
        <begin position="222"/>
        <end position="223"/>
    </location>
</feature>
<feature type="site" description="Cleavage; by PL1-PRO" evidence="1">
    <location>
        <begin position="809"/>
        <end position="810"/>
    </location>
</feature>
<feature type="site" description="Cleavage; by PL2-PRO" evidence="1">
    <location>
        <begin position="2838"/>
        <end position="2839"/>
    </location>
</feature>
<feature type="site" description="Cleavage; by 3CL-PRO" evidence="1">
    <location>
        <begin position="3334"/>
        <end position="3335"/>
    </location>
</feature>
<feature type="site" description="Cleavage; by 3CL-PRO" evidence="1">
    <location>
        <begin position="3637"/>
        <end position="3638"/>
    </location>
</feature>
<feature type="site" description="Cleavage; by 3CL-PRO" evidence="1">
    <location>
        <begin position="3924"/>
        <end position="3925"/>
    </location>
</feature>
<feature type="site" description="Cleavage; by 3CL-PRO" evidence="1">
    <location>
        <begin position="4016"/>
        <end position="4017"/>
    </location>
</feature>
<feature type="site" description="Cleavage; by 3CL-PRO" evidence="1">
    <location>
        <begin position="4210"/>
        <end position="4211"/>
    </location>
</feature>
<feature type="site" description="Cleavage; by 3CL-PRO" evidence="1">
    <location>
        <begin position="4320"/>
        <end position="4321"/>
    </location>
</feature>
<feature type="site" description="Cleavage; by 3CL-PRO" evidence="1">
    <location>
        <begin position="4457"/>
        <end position="4458"/>
    </location>
</feature>
<feature type="disulfide bond" evidence="21">
    <location>
        <begin position="2339"/>
        <end position="2363"/>
    </location>
</feature>
<feature type="disulfide bond" evidence="21">
    <location>
        <begin position="2354"/>
        <end position="2360"/>
    </location>
</feature>
<feature type="turn" evidence="25">
    <location>
        <begin position="3345"/>
        <end position="3347"/>
    </location>
</feature>
<feature type="helix" evidence="25">
    <location>
        <begin position="3348"/>
        <end position="3350"/>
    </location>
</feature>
<feature type="strand" evidence="25">
    <location>
        <begin position="3351"/>
        <end position="3356"/>
    </location>
</feature>
<feature type="strand" evidence="25">
    <location>
        <begin position="3359"/>
        <end position="3366"/>
    </location>
</feature>
<feature type="strand" evidence="25">
    <location>
        <begin position="3369"/>
        <end position="3373"/>
    </location>
</feature>
<feature type="helix" evidence="25">
    <location>
        <begin position="3374"/>
        <end position="3377"/>
    </location>
</feature>
<feature type="strand" evidence="25">
    <location>
        <begin position="3380"/>
        <end position="3382"/>
    </location>
</feature>
<feature type="helix" evidence="25">
    <location>
        <begin position="3388"/>
        <end position="3394"/>
    </location>
</feature>
<feature type="helix" evidence="25">
    <location>
        <begin position="3397"/>
        <end position="3399"/>
    </location>
</feature>
<feature type="strand" evidence="25">
    <location>
        <begin position="3400"/>
        <end position="3404"/>
    </location>
</feature>
<feature type="strand" evidence="25">
    <location>
        <begin position="3407"/>
        <end position="3409"/>
    </location>
</feature>
<feature type="strand" evidence="25">
    <location>
        <begin position="3411"/>
        <end position="3417"/>
    </location>
</feature>
<feature type="strand" evidence="25">
    <location>
        <begin position="3420"/>
        <end position="3427"/>
    </location>
</feature>
<feature type="strand" evidence="25">
    <location>
        <begin position="3434"/>
        <end position="3437"/>
    </location>
</feature>
<feature type="strand" evidence="25">
    <location>
        <begin position="3445"/>
        <end position="3452"/>
    </location>
</feature>
<feature type="strand" evidence="25">
    <location>
        <begin position="3455"/>
        <end position="3463"/>
    </location>
</feature>
<feature type="strand" evidence="25">
    <location>
        <begin position="3482"/>
        <end position="3485"/>
    </location>
</feature>
<feature type="strand" evidence="25">
    <location>
        <begin position="3491"/>
        <end position="3502"/>
    </location>
</feature>
<feature type="strand" evidence="25">
    <location>
        <begin position="3505"/>
        <end position="3509"/>
    </location>
</feature>
<feature type="strand" evidence="25">
    <location>
        <begin position="3521"/>
        <end position="3524"/>
    </location>
</feature>
<feature type="helix" evidence="25">
    <location>
        <begin position="3535"/>
        <end position="3547"/>
    </location>
</feature>
<feature type="helix" evidence="25">
    <location>
        <begin position="3561"/>
        <end position="3571"/>
    </location>
</feature>
<feature type="helix" evidence="25">
    <location>
        <begin position="3580"/>
        <end position="3589"/>
    </location>
</feature>
<feature type="helix" evidence="25">
    <location>
        <begin position="3593"/>
        <end position="3604"/>
    </location>
</feature>
<feature type="strand" evidence="25">
    <location>
        <begin position="3615"/>
        <end position="3617"/>
    </location>
</feature>
<feature type="helix" evidence="25">
    <location>
        <begin position="3624"/>
        <end position="3632"/>
    </location>
</feature>
<proteinExistence type="evidence at protein level"/>
<gene>
    <name type="ORF">1a</name>
</gene>
<dbReference type="EC" id="3.4.19.12"/>
<dbReference type="EC" id="3.4.22.-"/>
<dbReference type="EC" id="3.4.22.69"/>
<dbReference type="EC" id="2.7.7.50"/>
<dbReference type="EMBL" id="AY597011">
    <property type="status" value="NOT_ANNOTATED_CDS"/>
    <property type="molecule type" value="Genomic_RNA"/>
</dbReference>
<dbReference type="PDB" id="3D23">
    <property type="method" value="X-ray"/>
    <property type="resolution" value="2.50 A"/>
    <property type="chains" value="A/B/C/D=3335-3634"/>
</dbReference>
<dbReference type="PDBsum" id="3D23"/>
<dbReference type="SMR" id="P0C6U3"/>
<dbReference type="IntAct" id="P0C6U3">
    <property type="interactions" value="1"/>
</dbReference>
<dbReference type="SABIO-RK" id="P0C6U3"/>
<dbReference type="EvolutionaryTrace" id="P0C6U3"/>
<dbReference type="Proteomes" id="UP000008170">
    <property type="component" value="Segment"/>
</dbReference>
<dbReference type="GO" id="GO:0033644">
    <property type="term" value="C:host cell membrane"/>
    <property type="evidence" value="ECO:0007669"/>
    <property type="project" value="UniProtKB-SubCell"/>
</dbReference>
<dbReference type="GO" id="GO:0044220">
    <property type="term" value="C:host cell perinuclear region of cytoplasm"/>
    <property type="evidence" value="ECO:0007669"/>
    <property type="project" value="UniProtKB-SubCell"/>
</dbReference>
<dbReference type="GO" id="GO:0016020">
    <property type="term" value="C:membrane"/>
    <property type="evidence" value="ECO:0007669"/>
    <property type="project" value="UniProtKB-KW"/>
</dbReference>
<dbReference type="GO" id="GO:0004843">
    <property type="term" value="F:cysteine-type deubiquitinase activity"/>
    <property type="evidence" value="ECO:0007669"/>
    <property type="project" value="UniProtKB-EC"/>
</dbReference>
<dbReference type="GO" id="GO:0004197">
    <property type="term" value="F:cysteine-type endopeptidase activity"/>
    <property type="evidence" value="ECO:0007669"/>
    <property type="project" value="InterPro"/>
</dbReference>
<dbReference type="GO" id="GO:0004519">
    <property type="term" value="F:endonuclease activity"/>
    <property type="evidence" value="ECO:0007669"/>
    <property type="project" value="UniProtKB-KW"/>
</dbReference>
<dbReference type="GO" id="GO:0008168">
    <property type="term" value="F:methyltransferase activity"/>
    <property type="evidence" value="ECO:0007669"/>
    <property type="project" value="UniProtKB-KW"/>
</dbReference>
<dbReference type="GO" id="GO:0008242">
    <property type="term" value="F:omega peptidase activity"/>
    <property type="evidence" value="ECO:0007669"/>
    <property type="project" value="InterPro"/>
</dbReference>
<dbReference type="GO" id="GO:0003968">
    <property type="term" value="F:RNA-directed RNA polymerase activity"/>
    <property type="evidence" value="ECO:0007669"/>
    <property type="project" value="InterPro"/>
</dbReference>
<dbReference type="GO" id="GO:0003727">
    <property type="term" value="F:single-stranded RNA binding"/>
    <property type="evidence" value="ECO:0007669"/>
    <property type="project" value="InterPro"/>
</dbReference>
<dbReference type="GO" id="GO:0008270">
    <property type="term" value="F:zinc ion binding"/>
    <property type="evidence" value="ECO:0007669"/>
    <property type="project" value="UniProtKB-KW"/>
</dbReference>
<dbReference type="GO" id="GO:0032259">
    <property type="term" value="P:methylation"/>
    <property type="evidence" value="ECO:0007669"/>
    <property type="project" value="UniProtKB-KW"/>
</dbReference>
<dbReference type="GO" id="GO:0006508">
    <property type="term" value="P:proteolysis"/>
    <property type="evidence" value="ECO:0007669"/>
    <property type="project" value="UniProtKB-KW"/>
</dbReference>
<dbReference type="GO" id="GO:0010506">
    <property type="term" value="P:regulation of autophagy"/>
    <property type="evidence" value="ECO:0007669"/>
    <property type="project" value="InterPro"/>
</dbReference>
<dbReference type="GO" id="GO:0039520">
    <property type="term" value="P:symbiont-mediated activation of host autophagy"/>
    <property type="evidence" value="ECO:0007669"/>
    <property type="project" value="UniProtKB-KW"/>
</dbReference>
<dbReference type="GO" id="GO:0039595">
    <property type="term" value="P:symbiont-mediated degradation of host mRNA"/>
    <property type="evidence" value="ECO:0007669"/>
    <property type="project" value="UniProtKB-KW"/>
</dbReference>
<dbReference type="GO" id="GO:0039648">
    <property type="term" value="P:symbiont-mediated perturbation of host ubiquitin-like protein modification"/>
    <property type="evidence" value="ECO:0007669"/>
    <property type="project" value="UniProtKB-KW"/>
</dbReference>
<dbReference type="GO" id="GO:0039548">
    <property type="term" value="P:symbiont-mediated suppression of host cytoplasmic pattern recognition receptor signaling pathway via inhibition of IRF3 activity"/>
    <property type="evidence" value="ECO:0007669"/>
    <property type="project" value="UniProtKB-KW"/>
</dbReference>
<dbReference type="GO" id="GO:0039657">
    <property type="term" value="P:symbiont-mediated suppression of host gene expression"/>
    <property type="evidence" value="ECO:0007669"/>
    <property type="project" value="UniProtKB-KW"/>
</dbReference>
<dbReference type="GO" id="GO:0039579">
    <property type="term" value="P:symbiont-mediated suppression of host ISG15-protein conjugation"/>
    <property type="evidence" value="ECO:0007669"/>
    <property type="project" value="UniProtKB-KW"/>
</dbReference>
<dbReference type="GO" id="GO:0039502">
    <property type="term" value="P:symbiont-mediated suppression of host type I interferon-mediated signaling pathway"/>
    <property type="evidence" value="ECO:0007669"/>
    <property type="project" value="UniProtKB-KW"/>
</dbReference>
<dbReference type="GO" id="GO:0019079">
    <property type="term" value="P:viral genome replication"/>
    <property type="evidence" value="ECO:0007669"/>
    <property type="project" value="InterPro"/>
</dbReference>
<dbReference type="GO" id="GO:0019082">
    <property type="term" value="P:viral protein processing"/>
    <property type="evidence" value="ECO:0007669"/>
    <property type="project" value="InterPro"/>
</dbReference>
<dbReference type="GO" id="GO:0075523">
    <property type="term" value="P:viral translational frameshifting"/>
    <property type="evidence" value="ECO:0007669"/>
    <property type="project" value="UniProtKB-KW"/>
</dbReference>
<dbReference type="CDD" id="cd21901">
    <property type="entry name" value="alpha_betaCoV_Nsp10"/>
    <property type="match status" value="1"/>
</dbReference>
<dbReference type="CDD" id="cd21560">
    <property type="entry name" value="betaCoV-Nsp6"/>
    <property type="match status" value="1"/>
</dbReference>
<dbReference type="CDD" id="cd21519">
    <property type="entry name" value="betaCoV_Nsp2_MHV-like"/>
    <property type="match status" value="1"/>
</dbReference>
<dbReference type="CDD" id="cd21666">
    <property type="entry name" value="betaCoV_Nsp5_Mpro"/>
    <property type="match status" value="1"/>
</dbReference>
<dbReference type="CDD" id="cd21827">
    <property type="entry name" value="betaCoV_Nsp7"/>
    <property type="match status" value="1"/>
</dbReference>
<dbReference type="CDD" id="cd21831">
    <property type="entry name" value="betaCoV_Nsp8"/>
    <property type="match status" value="1"/>
</dbReference>
<dbReference type="CDD" id="cd21898">
    <property type="entry name" value="betaCoV_Nsp9"/>
    <property type="match status" value="1"/>
</dbReference>
<dbReference type="CDD" id="cd21732">
    <property type="entry name" value="betaCoV_PLPro"/>
    <property type="match status" value="1"/>
</dbReference>
<dbReference type="CDD" id="cd21473">
    <property type="entry name" value="cv_Nsp4_TM"/>
    <property type="match status" value="1"/>
</dbReference>
<dbReference type="CDD" id="cd21557">
    <property type="entry name" value="Macro_X_Nsp3-like"/>
    <property type="match status" value="1"/>
</dbReference>
<dbReference type="CDD" id="cd21879">
    <property type="entry name" value="MHV-like_Nsp1"/>
    <property type="match status" value="1"/>
</dbReference>
<dbReference type="CDD" id="cd21812">
    <property type="entry name" value="MHV-like_Nsp3_betaSM"/>
    <property type="match status" value="1"/>
</dbReference>
<dbReference type="CDD" id="cd21824">
    <property type="entry name" value="MHV-like_Nsp3_NAB"/>
    <property type="match status" value="1"/>
</dbReference>
<dbReference type="CDD" id="cd21714">
    <property type="entry name" value="TM_Y_MHV-like_Nsp3_C"/>
    <property type="match status" value="1"/>
</dbReference>
<dbReference type="CDD" id="cd21467">
    <property type="entry name" value="Ubl1_cv_Nsp3_N-like"/>
    <property type="match status" value="1"/>
</dbReference>
<dbReference type="FunFam" id="1.10.150.420:FF:000001">
    <property type="entry name" value="Replicase polyprotein"/>
    <property type="match status" value="1"/>
</dbReference>
<dbReference type="FunFam" id="2.40.10.10:FF:000045">
    <property type="entry name" value="Replicase polyprotein 1a"/>
    <property type="match status" value="1"/>
</dbReference>
<dbReference type="Gene3D" id="1.10.8.1190">
    <property type="match status" value="2"/>
</dbReference>
<dbReference type="Gene3D" id="2.60.120.1680">
    <property type="match status" value="1"/>
</dbReference>
<dbReference type="Gene3D" id="3.10.20.350">
    <property type="match status" value="1"/>
</dbReference>
<dbReference type="Gene3D" id="3.10.20.540">
    <property type="match status" value="1"/>
</dbReference>
<dbReference type="Gene3D" id="6.10.140.2090">
    <property type="match status" value="1"/>
</dbReference>
<dbReference type="Gene3D" id="1.10.150.420">
    <property type="entry name" value="Coronavirus nonstructural protein 4 C-terminus"/>
    <property type="match status" value="1"/>
</dbReference>
<dbReference type="Gene3D" id="3.40.220.10">
    <property type="entry name" value="Leucine Aminopeptidase, subunit E, domain 1"/>
    <property type="match status" value="1"/>
</dbReference>
<dbReference type="Gene3D" id="1.10.1840.10">
    <property type="entry name" value="main proteinase (3clpro) structure, domain 3"/>
    <property type="match status" value="1"/>
</dbReference>
<dbReference type="Gene3D" id="1.10.8.370">
    <property type="entry name" value="nsp7 replicase"/>
    <property type="match status" value="1"/>
</dbReference>
<dbReference type="Gene3D" id="3.30.70.3540">
    <property type="entry name" value="Nsp8 replicase, head domain"/>
    <property type="match status" value="1"/>
</dbReference>
<dbReference type="Gene3D" id="2.40.10.250">
    <property type="entry name" value="Replicase NSP9"/>
    <property type="match status" value="1"/>
</dbReference>
<dbReference type="Gene3D" id="3.40.50.11020">
    <property type="entry name" value="Replicase polyprotein, nucleic acid-binding domain"/>
    <property type="match status" value="1"/>
</dbReference>
<dbReference type="Gene3D" id="2.40.10.10">
    <property type="entry name" value="Trypsin-like serine proteases"/>
    <property type="match status" value="2"/>
</dbReference>
<dbReference type="InterPro" id="IPR046443">
    <property type="entry name" value="a/bCoV_NSP1_glob"/>
</dbReference>
<dbReference type="InterPro" id="IPR022570">
    <property type="entry name" value="B-CoV_A_NSP1"/>
</dbReference>
<dbReference type="InterPro" id="IPR046442">
    <property type="entry name" value="bCoV_NSP1_C"/>
</dbReference>
<dbReference type="InterPro" id="IPR043613">
    <property type="entry name" value="CoV_NSP2_C"/>
</dbReference>
<dbReference type="InterPro" id="IPR047573">
    <property type="entry name" value="CoV_NSP2_M"/>
</dbReference>
<dbReference type="InterPro" id="IPR049894">
    <property type="entry name" value="COV_NSP3_3ECTO"/>
</dbReference>
<dbReference type="InterPro" id="IPR043611">
    <property type="entry name" value="CoV_NSP3_C"/>
</dbReference>
<dbReference type="InterPro" id="IPR047566">
    <property type="entry name" value="CoV_NSP3_Y"/>
</dbReference>
<dbReference type="InterPro" id="IPR032505">
    <property type="entry name" value="CoV_NSP4_C"/>
</dbReference>
<dbReference type="InterPro" id="IPR043612">
    <property type="entry name" value="CoV_NSP4_N"/>
</dbReference>
<dbReference type="InterPro" id="IPR022733">
    <property type="entry name" value="DPUP_SUD_C_bCoV"/>
</dbReference>
<dbReference type="InterPro" id="IPR002589">
    <property type="entry name" value="Macro_dom"/>
</dbReference>
<dbReference type="InterPro" id="IPR043472">
    <property type="entry name" value="Macro_dom-like"/>
</dbReference>
<dbReference type="InterPro" id="IPR044371">
    <property type="entry name" value="Macro_X_NSP3-like"/>
</dbReference>
<dbReference type="InterPro" id="IPR036333">
    <property type="entry name" value="NSP10_sf_CoV"/>
</dbReference>
<dbReference type="InterPro" id="IPR044384">
    <property type="entry name" value="NSP2_MHV-like"/>
</dbReference>
<dbReference type="InterPro" id="IPR043615">
    <property type="entry name" value="NSP2_N_CoV"/>
</dbReference>
<dbReference type="InterPro" id="IPR044381">
    <property type="entry name" value="NSP3_DPUP_MHV"/>
</dbReference>
<dbReference type="InterPro" id="IPR047567">
    <property type="entry name" value="NSP3_G2M_bCoV"/>
</dbReference>
<dbReference type="InterPro" id="IPR032592">
    <property type="entry name" value="NSP3_NAB_bCoV"/>
</dbReference>
<dbReference type="InterPro" id="IPR042570">
    <property type="entry name" value="NSP3_NAB_bCoV_sf"/>
</dbReference>
<dbReference type="InterPro" id="IPR044357">
    <property type="entry name" value="NSP3_Ubl1_dom_CoV"/>
</dbReference>
<dbReference type="InterPro" id="IPR044353">
    <property type="entry name" value="Nsp3_Ubl2_dom_CoV"/>
</dbReference>
<dbReference type="InterPro" id="IPR038083">
    <property type="entry name" value="NSP3A-like"/>
</dbReference>
<dbReference type="InterPro" id="IPR038123">
    <property type="entry name" value="NSP4_C_sf_CoV"/>
</dbReference>
<dbReference type="InterPro" id="IPR044367">
    <property type="entry name" value="NSP6_betaCoV"/>
</dbReference>
<dbReference type="InterPro" id="IPR043610">
    <property type="entry name" value="NSP6_CoV"/>
</dbReference>
<dbReference type="InterPro" id="IPR014828">
    <property type="entry name" value="NSP7_CoV"/>
</dbReference>
<dbReference type="InterPro" id="IPR037204">
    <property type="entry name" value="NSP7_sf_CoV"/>
</dbReference>
<dbReference type="InterPro" id="IPR014829">
    <property type="entry name" value="NSP8_CoV"/>
</dbReference>
<dbReference type="InterPro" id="IPR037230">
    <property type="entry name" value="NSP8_sf_CoV"/>
</dbReference>
<dbReference type="InterPro" id="IPR014822">
    <property type="entry name" value="NSP9_CoV"/>
</dbReference>
<dbReference type="InterPro" id="IPR036499">
    <property type="entry name" value="NSP9_sf_CoV"/>
</dbReference>
<dbReference type="InterPro" id="IPR002705">
    <property type="entry name" value="Pept_C30/C16_B_coronavir"/>
</dbReference>
<dbReference type="InterPro" id="IPR013016">
    <property type="entry name" value="Peptidase_C16_CoV"/>
</dbReference>
<dbReference type="InterPro" id="IPR008740">
    <property type="entry name" value="Peptidase_C30_CoV"/>
</dbReference>
<dbReference type="InterPro" id="IPR043477">
    <property type="entry name" value="Peptidase_C30_dom3_CoV"/>
</dbReference>
<dbReference type="InterPro" id="IPR009003">
    <property type="entry name" value="Peptidase_S1_PA"/>
</dbReference>
<dbReference type="InterPro" id="IPR043504">
    <property type="entry name" value="Peptidase_S1_PA_chymotrypsin"/>
</dbReference>
<dbReference type="InterPro" id="IPR043177">
    <property type="entry name" value="PLpro_N_sf_CoV"/>
</dbReference>
<dbReference type="InterPro" id="IPR043503">
    <property type="entry name" value="PLpro_palm_finger_dom_CoV"/>
</dbReference>
<dbReference type="InterPro" id="IPR043178">
    <property type="entry name" value="PLpro_thumb_sf_CoV"/>
</dbReference>
<dbReference type="InterPro" id="IPR018995">
    <property type="entry name" value="RNA_synth_NSP10_CoV"/>
</dbReference>
<dbReference type="Pfam" id="PF11963">
    <property type="entry name" value="B-CoV_A_NSP1"/>
    <property type="match status" value="1"/>
</dbReference>
<dbReference type="Pfam" id="PF16251">
    <property type="entry name" value="bCoV_NAB"/>
    <property type="match status" value="1"/>
</dbReference>
<dbReference type="Pfam" id="PF09401">
    <property type="entry name" value="CoV_NSP10"/>
    <property type="match status" value="1"/>
</dbReference>
<dbReference type="Pfam" id="PF19218">
    <property type="entry name" value="CoV_NSP3_C"/>
    <property type="match status" value="1"/>
</dbReference>
<dbReference type="Pfam" id="PF16348">
    <property type="entry name" value="CoV_NSP4_C"/>
    <property type="match status" value="1"/>
</dbReference>
<dbReference type="Pfam" id="PF19217">
    <property type="entry name" value="CoV_NSP4_N"/>
    <property type="match status" value="1"/>
</dbReference>
<dbReference type="Pfam" id="PF19213">
    <property type="entry name" value="CoV_NSP6"/>
    <property type="match status" value="1"/>
</dbReference>
<dbReference type="Pfam" id="PF08716">
    <property type="entry name" value="CoV_NSP7"/>
    <property type="match status" value="1"/>
</dbReference>
<dbReference type="Pfam" id="PF08717">
    <property type="entry name" value="CoV_NSP8"/>
    <property type="match status" value="1"/>
</dbReference>
<dbReference type="Pfam" id="PF08710">
    <property type="entry name" value="CoV_NSP9"/>
    <property type="match status" value="1"/>
</dbReference>
<dbReference type="Pfam" id="PF08715">
    <property type="entry name" value="CoV_peptidase"/>
    <property type="match status" value="1"/>
</dbReference>
<dbReference type="Pfam" id="PF01661">
    <property type="entry name" value="Macro"/>
    <property type="match status" value="1"/>
</dbReference>
<dbReference type="Pfam" id="PF22104">
    <property type="entry name" value="MHV_Nsp3_DPUP"/>
    <property type="match status" value="1"/>
</dbReference>
<dbReference type="Pfam" id="PF01831">
    <property type="entry name" value="Peptidase_C16"/>
    <property type="match status" value="1"/>
</dbReference>
<dbReference type="Pfam" id="PF05409">
    <property type="entry name" value="Peptidase_C30"/>
    <property type="match status" value="1"/>
</dbReference>
<dbReference type="SMART" id="SM00506">
    <property type="entry name" value="A1pp"/>
    <property type="match status" value="1"/>
</dbReference>
<dbReference type="SUPFAM" id="SSF144246">
    <property type="entry name" value="Coronavirus NSP10-like"/>
    <property type="match status" value="1"/>
</dbReference>
<dbReference type="SUPFAM" id="SSF140367">
    <property type="entry name" value="Coronavirus NSP7-like"/>
    <property type="match status" value="1"/>
</dbReference>
<dbReference type="SUPFAM" id="SSF143076">
    <property type="entry name" value="Coronavirus NSP8-like"/>
    <property type="match status" value="1"/>
</dbReference>
<dbReference type="SUPFAM" id="SSF52949">
    <property type="entry name" value="Macro domain-like"/>
    <property type="match status" value="1"/>
</dbReference>
<dbReference type="SUPFAM" id="SSF159936">
    <property type="entry name" value="NSP3A-like"/>
    <property type="match status" value="1"/>
</dbReference>
<dbReference type="SUPFAM" id="SSF101816">
    <property type="entry name" value="Replicase NSP9"/>
    <property type="match status" value="1"/>
</dbReference>
<dbReference type="SUPFAM" id="SSF50494">
    <property type="entry name" value="Trypsin-like serine proteases"/>
    <property type="match status" value="1"/>
</dbReference>
<dbReference type="PROSITE" id="PS51963">
    <property type="entry name" value="BCOV_NSP1_C"/>
    <property type="match status" value="1"/>
</dbReference>
<dbReference type="PROSITE" id="PS51942">
    <property type="entry name" value="BCOV_NSP3C_C"/>
    <property type="match status" value="1"/>
</dbReference>
<dbReference type="PROSITE" id="PS51994">
    <property type="entry name" value="BCOV_NSP3E_G2M"/>
    <property type="match status" value="1"/>
</dbReference>
<dbReference type="PROSITE" id="PS51945">
    <property type="entry name" value="BCOV_NSP3E_NAB"/>
    <property type="match status" value="1"/>
</dbReference>
<dbReference type="PROSITE" id="PS51993">
    <property type="entry name" value="COV_3ECTO"/>
    <property type="match status" value="1"/>
</dbReference>
<dbReference type="PROSITE" id="PS51952">
    <property type="entry name" value="COV_EXON_MTASE_COACT"/>
    <property type="match status" value="1"/>
</dbReference>
<dbReference type="PROSITE" id="PS51962">
    <property type="entry name" value="COV_NSP1"/>
    <property type="match status" value="1"/>
</dbReference>
<dbReference type="PROSITE" id="PS51991">
    <property type="entry name" value="COV_NSP2_C"/>
    <property type="match status" value="1"/>
</dbReference>
<dbReference type="PROSITE" id="PS51990">
    <property type="entry name" value="COV_NSP2_M"/>
    <property type="match status" value="1"/>
</dbReference>
<dbReference type="PROSITE" id="PS51989">
    <property type="entry name" value="COV_NSP2_N"/>
    <property type="match status" value="1"/>
</dbReference>
<dbReference type="PROSITE" id="PS51992">
    <property type="entry name" value="COV_NSP3_Y"/>
    <property type="match status" value="1"/>
</dbReference>
<dbReference type="PROSITE" id="PS51943">
    <property type="entry name" value="COV_NSP3A_UBL"/>
    <property type="match status" value="1"/>
</dbReference>
<dbReference type="PROSITE" id="PS51944">
    <property type="entry name" value="COV_NSP3D_UBL"/>
    <property type="match status" value="1"/>
</dbReference>
<dbReference type="PROSITE" id="PS51946">
    <property type="entry name" value="COV_NSP4C"/>
    <property type="match status" value="1"/>
</dbReference>
<dbReference type="PROSITE" id="PS51949">
    <property type="entry name" value="COV_NSP7"/>
    <property type="match status" value="1"/>
</dbReference>
<dbReference type="PROSITE" id="PS51950">
    <property type="entry name" value="COV_NSP8"/>
    <property type="match status" value="1"/>
</dbReference>
<dbReference type="PROSITE" id="PS51951">
    <property type="entry name" value="COV_NSP9_SSRNA_BD"/>
    <property type="match status" value="1"/>
</dbReference>
<dbReference type="PROSITE" id="PS51442">
    <property type="entry name" value="M_PRO"/>
    <property type="match status" value="1"/>
</dbReference>
<dbReference type="PROSITE" id="PS51154">
    <property type="entry name" value="MACRO"/>
    <property type="match status" value="1"/>
</dbReference>
<dbReference type="PROSITE" id="PS51124">
    <property type="entry name" value="PEPTIDASE_C16"/>
    <property type="match status" value="2"/>
</dbReference>
<name>R1A_CVHN1</name>
<keyword id="KW-0002">3D-structure</keyword>
<keyword id="KW-1072">Activation of host autophagy by virus</keyword>
<keyword id="KW-1132">Decay of host mRNAs by virus</keyword>
<keyword id="KW-1015">Disulfide bond</keyword>
<keyword id="KW-0255">Endonuclease</keyword>
<keyword id="KW-1262">Eukaryotic host gene expression shutoff by virus</keyword>
<keyword id="KW-1193">Eukaryotic host translation shutoff by virus</keyword>
<keyword id="KW-1035">Host cytoplasm</keyword>
<keyword id="KW-1190">Host gene expression shutoff by virus</keyword>
<keyword id="KW-1043">Host membrane</keyword>
<keyword id="KW-1192">Host mRNA suppression by virus</keyword>
<keyword id="KW-0945">Host-virus interaction</keyword>
<keyword id="KW-0378">Hydrolase</keyword>
<keyword id="KW-1090">Inhibition of host innate immune response by virus</keyword>
<keyword id="KW-1114">Inhibition of host interferon signaling pathway by virus</keyword>
<keyword id="KW-1092">Inhibition of host IRF3 by virus</keyword>
<keyword id="KW-1095">Inhibition of host ISG15 by virus</keyword>
<keyword id="KW-1113">Inhibition of host RLR pathway by virus</keyword>
<keyword id="KW-0922">Interferon antiviral system evasion</keyword>
<keyword id="KW-0472">Membrane</keyword>
<keyword id="KW-0479">Metal-binding</keyword>
<keyword id="KW-0489">Methyltransferase</keyword>
<keyword id="KW-1127">Modulation of host ubiquitin pathway by viral deubiquitinase</keyword>
<keyword id="KW-1130">Modulation of host ubiquitin pathway by virus</keyword>
<keyword id="KW-0540">Nuclease</keyword>
<keyword id="KW-0645">Protease</keyword>
<keyword id="KW-0677">Repeat</keyword>
<keyword id="KW-0688">Ribosomal frameshifting</keyword>
<keyword id="KW-0694">RNA-binding</keyword>
<keyword id="KW-0788">Thiol protease</keyword>
<keyword id="KW-0808">Transferase</keyword>
<keyword id="KW-0812">Transmembrane</keyword>
<keyword id="KW-1133">Transmembrane helix</keyword>
<keyword id="KW-0833">Ubl conjugation pathway</keyword>
<keyword id="KW-0899">Viral immunoevasion</keyword>
<keyword id="KW-0862">Zinc</keyword>
<keyword id="KW-0863">Zinc-finger</keyword>
<evidence type="ECO:0000250" key="1"/>
<evidence type="ECO:0000250" key="2">
    <source>
        <dbReference type="UniProtKB" id="P0DTC1"/>
    </source>
</evidence>
<evidence type="ECO:0000255" key="3"/>
<evidence type="ECO:0000255" key="4">
    <source>
        <dbReference type="PROSITE-ProRule" id="PRU00214"/>
    </source>
</evidence>
<evidence type="ECO:0000255" key="5">
    <source>
        <dbReference type="PROSITE-ProRule" id="PRU00444"/>
    </source>
</evidence>
<evidence type="ECO:0000255" key="6">
    <source>
        <dbReference type="PROSITE-ProRule" id="PRU00490"/>
    </source>
</evidence>
<evidence type="ECO:0000255" key="7">
    <source>
        <dbReference type="PROSITE-ProRule" id="PRU00772"/>
    </source>
</evidence>
<evidence type="ECO:0000255" key="8">
    <source>
        <dbReference type="PROSITE-ProRule" id="PRU01289"/>
    </source>
</evidence>
<evidence type="ECO:0000255" key="9">
    <source>
        <dbReference type="PROSITE-ProRule" id="PRU01290"/>
    </source>
</evidence>
<evidence type="ECO:0000255" key="10">
    <source>
        <dbReference type="PROSITE-ProRule" id="PRU01291"/>
    </source>
</evidence>
<evidence type="ECO:0000255" key="11">
    <source>
        <dbReference type="PROSITE-ProRule" id="PRU01294"/>
    </source>
</evidence>
<evidence type="ECO:0000255" key="12">
    <source>
        <dbReference type="PROSITE-ProRule" id="PRU01295"/>
    </source>
</evidence>
<evidence type="ECO:0000255" key="13">
    <source>
        <dbReference type="PROSITE-ProRule" id="PRU01296"/>
    </source>
</evidence>
<evidence type="ECO:0000255" key="14">
    <source>
        <dbReference type="PROSITE-ProRule" id="PRU01297"/>
    </source>
</evidence>
<evidence type="ECO:0000255" key="15">
    <source>
        <dbReference type="PROSITE-ProRule" id="PRU01307"/>
    </source>
</evidence>
<evidence type="ECO:0000255" key="16">
    <source>
        <dbReference type="PROSITE-ProRule" id="PRU01308"/>
    </source>
</evidence>
<evidence type="ECO:0000255" key="17">
    <source>
        <dbReference type="PROSITE-ProRule" id="PRU01333"/>
    </source>
</evidence>
<evidence type="ECO:0000255" key="18">
    <source>
        <dbReference type="PROSITE-ProRule" id="PRU01334"/>
    </source>
</evidence>
<evidence type="ECO:0000255" key="19">
    <source>
        <dbReference type="PROSITE-ProRule" id="PRU01335"/>
    </source>
</evidence>
<evidence type="ECO:0000255" key="20">
    <source>
        <dbReference type="PROSITE-ProRule" id="PRU01336"/>
    </source>
</evidence>
<evidence type="ECO:0000255" key="21">
    <source>
        <dbReference type="PROSITE-ProRule" id="PRU01337"/>
    </source>
</evidence>
<evidence type="ECO:0000255" key="22">
    <source>
        <dbReference type="PROSITE-ProRule" id="PRU01338"/>
    </source>
</evidence>
<evidence type="ECO:0000256" key="23">
    <source>
        <dbReference type="SAM" id="MobiDB-lite"/>
    </source>
</evidence>
<evidence type="ECO:0000305" key="24"/>
<evidence type="ECO:0007829" key="25">
    <source>
        <dbReference type="PDB" id="3D23"/>
    </source>
</evidence>
<protein>
    <recommendedName>
        <fullName>Replicase polyprotein 1a</fullName>
        <shortName>pp1a</shortName>
    </recommendedName>
    <alternativeName>
        <fullName>ORF1a polyprotein</fullName>
    </alternativeName>
    <component>
        <recommendedName>
            <fullName>Non-structural protein 1</fullName>
            <shortName>nsp1</shortName>
        </recommendedName>
        <alternativeName>
            <fullName>p28</fullName>
        </alternativeName>
    </component>
    <component>
        <recommendedName>
            <fullName>Non-structural protein 2</fullName>
            <shortName>nsp2</shortName>
        </recommendedName>
        <alternativeName>
            <fullName>p65</fullName>
        </alternativeName>
    </component>
    <component>
        <recommendedName>
            <fullName>Papain-like protease nsp3</fullName>
            <shortName>PL-PRO</shortName>
            <ecNumber>3.4.19.12</ecNumber>
            <ecNumber>3.4.22.-</ecNumber>
        </recommendedName>
        <alternativeName>
            <fullName>Non-structural protein 3</fullName>
            <shortName>nsp3</shortName>
        </alternativeName>
        <alternativeName>
            <fullName>PL1-PRO/PL2-PRO</fullName>
        </alternativeName>
        <alternativeName>
            <fullName>PL1/PL2</fullName>
        </alternativeName>
        <alternativeName>
            <fullName>PL2-PRO</fullName>
        </alternativeName>
        <alternativeName>
            <fullName>Papain-like proteinases 1/2</fullName>
        </alternativeName>
        <alternativeName>
            <fullName>p210</fullName>
        </alternativeName>
    </component>
    <component>
        <recommendedName>
            <fullName>Non-structural protein 4</fullName>
            <shortName>nsp4</shortName>
        </recommendedName>
        <alternativeName>
            <fullName>Peptide HD2</fullName>
        </alternativeName>
        <alternativeName>
            <fullName>p44</fullName>
        </alternativeName>
    </component>
    <component>
        <recommendedName>
            <fullName>3C-like proteinase nsp5</fullName>
            <shortName>3CL-PRO</shortName>
            <shortName>3CLp</shortName>
            <ecNumber>3.4.22.69</ecNumber>
        </recommendedName>
        <alternativeName>
            <fullName>M-PRO</fullName>
        </alternativeName>
        <alternativeName>
            <fullName>nsp5</fullName>
        </alternativeName>
        <alternativeName>
            <fullName>p27</fullName>
        </alternativeName>
    </component>
    <component>
        <recommendedName>
            <fullName>Non-structural protein 6</fullName>
            <shortName>nsp6</shortName>
        </recommendedName>
    </component>
    <component>
        <recommendedName>
            <fullName>Non-structural protein 7</fullName>
            <shortName>nsp7</shortName>
        </recommendedName>
        <alternativeName>
            <fullName>p10</fullName>
        </alternativeName>
    </component>
    <component>
        <recommendedName>
            <fullName>Non-structural protein 8</fullName>
            <shortName>nsp8</shortName>
        </recommendedName>
        <alternativeName>
            <fullName>p22</fullName>
        </alternativeName>
    </component>
    <component>
        <recommendedName>
            <fullName>RNA-capping enzyme subunit nsp9</fullName>
        </recommendedName>
        <alternativeName>
            <fullName>Non-structural protein 9</fullName>
            <shortName>nsp9</shortName>
            <ecNumber>2.7.7.50</ecNumber>
        </alternativeName>
        <alternativeName>
            <fullName>p12</fullName>
        </alternativeName>
    </component>
    <component>
        <recommendedName>
            <fullName>Non-structural protein 10</fullName>
            <shortName>nsp10</shortName>
        </recommendedName>
        <alternativeName>
            <fullName>Growth factor-like peptide</fullName>
            <shortName>GFL</shortName>
        </alternativeName>
        <alternativeName>
            <fullName>p15</fullName>
        </alternativeName>
    </component>
    <component>
        <recommendedName>
            <fullName>Non-structural protein 11</fullName>
            <shortName>nsp11</shortName>
        </recommendedName>
    </component>
</protein>
<organismHost>
    <name type="scientific">Homo sapiens</name>
    <name type="common">Human</name>
    <dbReference type="NCBI Taxonomy" id="9606"/>
</organismHost>
<reference key="1">
    <citation type="journal article" date="2005" name="J. Virol.">
        <title>Characterization and complete genome sequence of a novel coronavirus, coronavirus HKU1, from patients with pneumonia.</title>
        <authorList>
            <person name="Woo P.C.Y."/>
            <person name="Lau S.K.P."/>
            <person name="Chu C.-M."/>
            <person name="Chan K.-H."/>
            <person name="Tsoi H.-W."/>
            <person name="Huang Y."/>
            <person name="Wong B.H.L."/>
            <person name="Poon R.W.S."/>
            <person name="Cai J.J."/>
            <person name="Luk W.-K."/>
            <person name="Poon L.L.M."/>
            <person name="Wong S.S.Y."/>
            <person name="Guan Y."/>
            <person name="Peiris J.S.M."/>
            <person name="Yuen K.-Y."/>
        </authorList>
    </citation>
    <scope>NUCLEOTIDE SEQUENCE [GENOMIC RNA]</scope>
</reference>